<protein>
    <recommendedName>
        <fullName evidence="1">Phosphoglycerol transferase I</fullName>
        <ecNumber evidence="1">2.7.8.20</ecNumber>
    </recommendedName>
    <alternativeName>
        <fullName evidence="1">Phosphatidylglycerol--membrane-oligosaccharide glycerophosphotransferase</fullName>
    </alternativeName>
</protein>
<feature type="chain" id="PRO_1000136632" description="Phosphoglycerol transferase I">
    <location>
        <begin position="1"/>
        <end position="763"/>
    </location>
</feature>
<feature type="transmembrane region" description="Helical" evidence="1">
    <location>
        <begin position="1"/>
        <end position="21"/>
    </location>
</feature>
<feature type="transmembrane region" description="Helical" evidence="1">
    <location>
        <begin position="26"/>
        <end position="46"/>
    </location>
</feature>
<feature type="transmembrane region" description="Helical" evidence="1">
    <location>
        <begin position="77"/>
        <end position="97"/>
    </location>
</feature>
<feature type="transmembrane region" description="Helical" evidence="1">
    <location>
        <begin position="108"/>
        <end position="128"/>
    </location>
</feature>
<sequence>MSELLSVALFLASVLIYAWKAGRNTWWFAATLTVLGLFVILNITLYASDYFTGDGINDAVLYTLTNSLTGAGVGKYILPGIGIALALVAVFGALGWVLRRRRHHPHHVGYSLLALLLALGSVDASPAFRQITELVKSQMRDGDPDFAVYYKEPAKTIPNPKLNLVYIYGESLERTYFDNDAFPNLTPELGALKNEGLDFSHTMQLPGTDYTIAGMVASQCGIPLFAPFEGNASASVSSFFPQNICLGDILKNSGYQNYFVQGANLRFAGKDVFLKSHGFDHLYGAEELKTVVADPSYRNDWGFYDDTVLDEAWKKFEALSRSGQRFSLFTLTVDTHHPDGFISRTCNRKRYDYDGKPNQSFSAVSCSQENIAEFINKIKASPWFKDTVIVVSSDHLAMNNTAWKYLNKQDRNNLFFILRGDKPQQETLAVKRNTMDNGATVLDILGGDNFIGLGRSSLSGQSLSEVFLNVKEKVLAMKPDIIRLWNFPKEIKDFTVDRDKNMIAFSGSHFRLPLLLRVSDKRVEPLPESEYSAPLRFQLADFAPRDNFVWIDRCYKMAQLWAPALALSTDWCVSQGQLGGQQTVQHVDKAQWQGKTAFKDTMIDMERYKGNVDTLKIVDNDIRYKADSFIFNVAGAPEEVKQFSGISRPESWGRWSNAQLGDEVKIEYKAPLPKKFDLVITAKAFGDNANRPIPVRVGNEEQTLVLGHDVSTITLHFNNPTDANTLVIAPPAPVSTNEGNILGHSPRKLGIGMVEIKVVNVEG</sequence>
<evidence type="ECO:0000255" key="1">
    <source>
        <dbReference type="HAMAP-Rule" id="MF_01070"/>
    </source>
</evidence>
<organism>
    <name type="scientific">Salmonella schwarzengrund (strain CVM19633)</name>
    <dbReference type="NCBI Taxonomy" id="439843"/>
    <lineage>
        <taxon>Bacteria</taxon>
        <taxon>Pseudomonadati</taxon>
        <taxon>Pseudomonadota</taxon>
        <taxon>Gammaproteobacteria</taxon>
        <taxon>Enterobacterales</taxon>
        <taxon>Enterobacteriaceae</taxon>
        <taxon>Salmonella</taxon>
    </lineage>
</organism>
<name>OPGB_SALSV</name>
<proteinExistence type="inferred from homology"/>
<comment type="function">
    <text evidence="1">Transfers a phosphoglycerol residue from phosphatidylglycerol to the membrane-bound nascent glucan backbones.</text>
</comment>
<comment type="catalytic activity">
    <reaction evidence="1">
        <text>a phosphatidylglycerol + a membrane-derived-oligosaccharide D-glucose = a 1,2-diacyl-sn-glycerol + a membrane-derived-oligosaccharide 6-(glycerophospho)-D-glucose.</text>
        <dbReference type="EC" id="2.7.8.20"/>
    </reaction>
</comment>
<comment type="pathway">
    <text evidence="1">Glycan metabolism; osmoregulated periplasmic glucan (OPG) biosynthesis.</text>
</comment>
<comment type="subcellular location">
    <subcellularLocation>
        <location evidence="1">Cell inner membrane</location>
        <topology evidence="1">Multi-pass membrane protein</topology>
    </subcellularLocation>
</comment>
<comment type="similarity">
    <text evidence="1">Belongs to the OpgB family.</text>
</comment>
<reference key="1">
    <citation type="journal article" date="2011" name="J. Bacteriol.">
        <title>Comparative genomics of 28 Salmonella enterica isolates: evidence for CRISPR-mediated adaptive sublineage evolution.</title>
        <authorList>
            <person name="Fricke W.F."/>
            <person name="Mammel M.K."/>
            <person name="McDermott P.F."/>
            <person name="Tartera C."/>
            <person name="White D.G."/>
            <person name="Leclerc J.E."/>
            <person name="Ravel J."/>
            <person name="Cebula T.A."/>
        </authorList>
    </citation>
    <scope>NUCLEOTIDE SEQUENCE [LARGE SCALE GENOMIC DNA]</scope>
    <source>
        <strain>CVM19633</strain>
    </source>
</reference>
<keyword id="KW-0997">Cell inner membrane</keyword>
<keyword id="KW-1003">Cell membrane</keyword>
<keyword id="KW-0472">Membrane</keyword>
<keyword id="KW-0808">Transferase</keyword>
<keyword id="KW-0812">Transmembrane</keyword>
<keyword id="KW-1133">Transmembrane helix</keyword>
<accession>B4TU18</accession>
<dbReference type="EC" id="2.7.8.20" evidence="1"/>
<dbReference type="EMBL" id="CP001127">
    <property type="protein sequence ID" value="ACF90701.1"/>
    <property type="molecule type" value="Genomic_DNA"/>
</dbReference>
<dbReference type="RefSeq" id="WP_001292725.1">
    <property type="nucleotide sequence ID" value="NC_011094.1"/>
</dbReference>
<dbReference type="SMR" id="B4TU18"/>
<dbReference type="KEGG" id="sew:SeSA_A4795"/>
<dbReference type="HOGENOM" id="CLU_023986_1_0_6"/>
<dbReference type="UniPathway" id="UPA00637"/>
<dbReference type="Proteomes" id="UP000001865">
    <property type="component" value="Chromosome"/>
</dbReference>
<dbReference type="GO" id="GO:0005886">
    <property type="term" value="C:plasma membrane"/>
    <property type="evidence" value="ECO:0007669"/>
    <property type="project" value="UniProtKB-SubCell"/>
</dbReference>
<dbReference type="GO" id="GO:0008960">
    <property type="term" value="F:phosphatidylglycerol-membrane-oligosaccharide glycerophosphotransferase activity"/>
    <property type="evidence" value="ECO:0007669"/>
    <property type="project" value="UniProtKB-UniRule"/>
</dbReference>
<dbReference type="GO" id="GO:0009250">
    <property type="term" value="P:glucan biosynthetic process"/>
    <property type="evidence" value="ECO:0007669"/>
    <property type="project" value="UniProtKB-UniRule"/>
</dbReference>
<dbReference type="CDD" id="cd16015">
    <property type="entry name" value="LTA_synthase"/>
    <property type="match status" value="1"/>
</dbReference>
<dbReference type="FunFam" id="3.40.720.10:FF:000009">
    <property type="entry name" value="Phosphoglycerol transferase I"/>
    <property type="match status" value="1"/>
</dbReference>
<dbReference type="Gene3D" id="3.40.720.10">
    <property type="entry name" value="Alkaline Phosphatase, subunit A"/>
    <property type="match status" value="1"/>
</dbReference>
<dbReference type="HAMAP" id="MF_01070">
    <property type="entry name" value="MdoB_OpgB"/>
    <property type="match status" value="1"/>
</dbReference>
<dbReference type="InterPro" id="IPR017850">
    <property type="entry name" value="Alkaline_phosphatase_core_sf"/>
</dbReference>
<dbReference type="InterPro" id="IPR054288">
    <property type="entry name" value="DUF7024"/>
</dbReference>
<dbReference type="InterPro" id="IPR020881">
    <property type="entry name" value="OpgB"/>
</dbReference>
<dbReference type="InterPro" id="IPR050448">
    <property type="entry name" value="OpgB/LTA_synthase_biosynth"/>
</dbReference>
<dbReference type="InterPro" id="IPR000917">
    <property type="entry name" value="Sulfatase_N"/>
</dbReference>
<dbReference type="NCBIfam" id="NF003000">
    <property type="entry name" value="PRK03776.1"/>
    <property type="match status" value="1"/>
</dbReference>
<dbReference type="PANTHER" id="PTHR47371">
    <property type="entry name" value="LIPOTEICHOIC ACID SYNTHASE"/>
    <property type="match status" value="1"/>
</dbReference>
<dbReference type="PANTHER" id="PTHR47371:SF3">
    <property type="entry name" value="PHOSPHOGLYCEROL TRANSFERASE I"/>
    <property type="match status" value="1"/>
</dbReference>
<dbReference type="Pfam" id="PF22895">
    <property type="entry name" value="DUF7024"/>
    <property type="match status" value="1"/>
</dbReference>
<dbReference type="Pfam" id="PF00884">
    <property type="entry name" value="Sulfatase"/>
    <property type="match status" value="1"/>
</dbReference>
<dbReference type="SUPFAM" id="SSF53649">
    <property type="entry name" value="Alkaline phosphatase-like"/>
    <property type="match status" value="1"/>
</dbReference>
<gene>
    <name evidence="1" type="primary">mdoB</name>
    <name evidence="1" type="synonym">opgB</name>
    <name type="ordered locus">SeSA_A4795</name>
</gene>